<accession>Q9UTK3</accession>
<reference key="1">
    <citation type="journal article" date="2002" name="Nature">
        <title>The genome sequence of Schizosaccharomyces pombe.</title>
        <authorList>
            <person name="Wood V."/>
            <person name="Gwilliam R."/>
            <person name="Rajandream M.A."/>
            <person name="Lyne M.H."/>
            <person name="Lyne R."/>
            <person name="Stewart A."/>
            <person name="Sgouros J.G."/>
            <person name="Peat N."/>
            <person name="Hayles J."/>
            <person name="Baker S.G."/>
            <person name="Basham D."/>
            <person name="Bowman S."/>
            <person name="Brooks K."/>
            <person name="Brown D."/>
            <person name="Brown S."/>
            <person name="Chillingworth T."/>
            <person name="Churcher C.M."/>
            <person name="Collins M."/>
            <person name="Connor R."/>
            <person name="Cronin A."/>
            <person name="Davis P."/>
            <person name="Feltwell T."/>
            <person name="Fraser A."/>
            <person name="Gentles S."/>
            <person name="Goble A."/>
            <person name="Hamlin N."/>
            <person name="Harris D.E."/>
            <person name="Hidalgo J."/>
            <person name="Hodgson G."/>
            <person name="Holroyd S."/>
            <person name="Hornsby T."/>
            <person name="Howarth S."/>
            <person name="Huckle E.J."/>
            <person name="Hunt S."/>
            <person name="Jagels K."/>
            <person name="James K.D."/>
            <person name="Jones L."/>
            <person name="Jones M."/>
            <person name="Leather S."/>
            <person name="McDonald S."/>
            <person name="McLean J."/>
            <person name="Mooney P."/>
            <person name="Moule S."/>
            <person name="Mungall K.L."/>
            <person name="Murphy L.D."/>
            <person name="Niblett D."/>
            <person name="Odell C."/>
            <person name="Oliver K."/>
            <person name="O'Neil S."/>
            <person name="Pearson D."/>
            <person name="Quail M.A."/>
            <person name="Rabbinowitsch E."/>
            <person name="Rutherford K.M."/>
            <person name="Rutter S."/>
            <person name="Saunders D."/>
            <person name="Seeger K."/>
            <person name="Sharp S."/>
            <person name="Skelton J."/>
            <person name="Simmonds M.N."/>
            <person name="Squares R."/>
            <person name="Squares S."/>
            <person name="Stevens K."/>
            <person name="Taylor K."/>
            <person name="Taylor R.G."/>
            <person name="Tivey A."/>
            <person name="Walsh S.V."/>
            <person name="Warren T."/>
            <person name="Whitehead S."/>
            <person name="Woodward J.R."/>
            <person name="Volckaert G."/>
            <person name="Aert R."/>
            <person name="Robben J."/>
            <person name="Grymonprez B."/>
            <person name="Weltjens I."/>
            <person name="Vanstreels E."/>
            <person name="Rieger M."/>
            <person name="Schaefer M."/>
            <person name="Mueller-Auer S."/>
            <person name="Gabel C."/>
            <person name="Fuchs M."/>
            <person name="Duesterhoeft A."/>
            <person name="Fritzc C."/>
            <person name="Holzer E."/>
            <person name="Moestl D."/>
            <person name="Hilbert H."/>
            <person name="Borzym K."/>
            <person name="Langer I."/>
            <person name="Beck A."/>
            <person name="Lehrach H."/>
            <person name="Reinhardt R."/>
            <person name="Pohl T.M."/>
            <person name="Eger P."/>
            <person name="Zimmermann W."/>
            <person name="Wedler H."/>
            <person name="Wambutt R."/>
            <person name="Purnelle B."/>
            <person name="Goffeau A."/>
            <person name="Cadieu E."/>
            <person name="Dreano S."/>
            <person name="Gloux S."/>
            <person name="Lelaure V."/>
            <person name="Mottier S."/>
            <person name="Galibert F."/>
            <person name="Aves S.J."/>
            <person name="Xiang Z."/>
            <person name="Hunt C."/>
            <person name="Moore K."/>
            <person name="Hurst S.M."/>
            <person name="Lucas M."/>
            <person name="Rochet M."/>
            <person name="Gaillardin C."/>
            <person name="Tallada V.A."/>
            <person name="Garzon A."/>
            <person name="Thode G."/>
            <person name="Daga R.R."/>
            <person name="Cruzado L."/>
            <person name="Jimenez J."/>
            <person name="Sanchez M."/>
            <person name="del Rey F."/>
            <person name="Benito J."/>
            <person name="Dominguez A."/>
            <person name="Revuelta J.L."/>
            <person name="Moreno S."/>
            <person name="Armstrong J."/>
            <person name="Forsburg S.L."/>
            <person name="Cerutti L."/>
            <person name="Lowe T."/>
            <person name="McCombie W.R."/>
            <person name="Paulsen I."/>
            <person name="Potashkin J."/>
            <person name="Shpakovski G.V."/>
            <person name="Ussery D."/>
            <person name="Barrell B.G."/>
            <person name="Nurse P."/>
        </authorList>
    </citation>
    <scope>NUCLEOTIDE SEQUENCE [LARGE SCALE GENOMIC DNA]</scope>
    <source>
        <strain>972 / ATCC 24843</strain>
    </source>
</reference>
<dbReference type="EC" id="6.3.4.21" evidence="2"/>
<dbReference type="EMBL" id="CU329670">
    <property type="protein sequence ID" value="CAB62416.1"/>
    <property type="molecule type" value="Genomic_DNA"/>
</dbReference>
<dbReference type="PIR" id="T50075">
    <property type="entry name" value="T50075"/>
</dbReference>
<dbReference type="RefSeq" id="NP_594094.1">
    <property type="nucleotide sequence ID" value="NM_001019518.2"/>
</dbReference>
<dbReference type="SMR" id="Q9UTK3"/>
<dbReference type="FunCoup" id="Q9UTK3">
    <property type="interactions" value="411"/>
</dbReference>
<dbReference type="STRING" id="284812.Q9UTK3"/>
<dbReference type="PaxDb" id="4896-SPAC1486.06.1"/>
<dbReference type="EnsemblFungi" id="SPAC1486.06.1">
    <property type="protein sequence ID" value="SPAC1486.06.1:pep"/>
    <property type="gene ID" value="SPAC1486.06"/>
</dbReference>
<dbReference type="PomBase" id="SPAC1486.06"/>
<dbReference type="VEuPathDB" id="FungiDB:SPAC1486.06"/>
<dbReference type="eggNOG" id="KOG2511">
    <property type="taxonomic scope" value="Eukaryota"/>
</dbReference>
<dbReference type="HOGENOM" id="CLU_030991_0_0_1"/>
<dbReference type="InParanoid" id="Q9UTK3"/>
<dbReference type="OMA" id="IEHCLEY"/>
<dbReference type="PhylomeDB" id="Q9UTK3"/>
<dbReference type="Reactome" id="R-SPO-197264">
    <property type="pathway name" value="Nicotinamide salvaging"/>
</dbReference>
<dbReference type="Reactome" id="R-SPO-6798695">
    <property type="pathway name" value="Neutrophil degranulation"/>
</dbReference>
<dbReference type="UniPathway" id="UPA00253">
    <property type="reaction ID" value="UER00457"/>
</dbReference>
<dbReference type="PRO" id="PR:Q9UTK3"/>
<dbReference type="Proteomes" id="UP000002485">
    <property type="component" value="Chromosome I"/>
</dbReference>
<dbReference type="GO" id="GO:0005829">
    <property type="term" value="C:cytosol"/>
    <property type="evidence" value="ECO:0000318"/>
    <property type="project" value="GO_Central"/>
</dbReference>
<dbReference type="GO" id="GO:0005739">
    <property type="term" value="C:mitochondrion"/>
    <property type="evidence" value="ECO:0007005"/>
    <property type="project" value="PomBase"/>
</dbReference>
<dbReference type="GO" id="GO:0005634">
    <property type="term" value="C:nucleus"/>
    <property type="evidence" value="ECO:0007005"/>
    <property type="project" value="PomBase"/>
</dbReference>
<dbReference type="GO" id="GO:0046872">
    <property type="term" value="F:metal ion binding"/>
    <property type="evidence" value="ECO:0007669"/>
    <property type="project" value="UniProtKB-KW"/>
</dbReference>
<dbReference type="GO" id="GO:0004516">
    <property type="term" value="F:nicotinate phosphoribosyltransferase activity"/>
    <property type="evidence" value="ECO:0000318"/>
    <property type="project" value="GO_Central"/>
</dbReference>
<dbReference type="GO" id="GO:0016740">
    <property type="term" value="F:transferase activity"/>
    <property type="evidence" value="ECO:0007669"/>
    <property type="project" value="UniProtKB-KW"/>
</dbReference>
<dbReference type="GO" id="GO:0034355">
    <property type="term" value="P:NAD biosynthetic process via the salvage pathway"/>
    <property type="evidence" value="ECO:0000318"/>
    <property type="project" value="GO_Central"/>
</dbReference>
<dbReference type="GO" id="GO:0019358">
    <property type="term" value="P:nicotinate nucleotide salvage"/>
    <property type="evidence" value="ECO:0000266"/>
    <property type="project" value="PomBase"/>
</dbReference>
<dbReference type="CDD" id="cd01401">
    <property type="entry name" value="PncB_like"/>
    <property type="match status" value="1"/>
</dbReference>
<dbReference type="FunFam" id="3.20.140.10:FF:000009">
    <property type="entry name" value="Nicotinate phosphoribosyltransferase"/>
    <property type="match status" value="1"/>
</dbReference>
<dbReference type="Gene3D" id="3.20.140.10">
    <property type="entry name" value="nicotinate phosphoribosyltransferase"/>
    <property type="match status" value="1"/>
</dbReference>
<dbReference type="HAMAP" id="MF_00570">
    <property type="entry name" value="NAPRTase"/>
    <property type="match status" value="1"/>
</dbReference>
<dbReference type="InterPro" id="IPR041525">
    <property type="entry name" value="N/Namide_PRibTrfase"/>
</dbReference>
<dbReference type="InterPro" id="IPR040727">
    <property type="entry name" value="NAPRTase_N"/>
</dbReference>
<dbReference type="InterPro" id="IPR006406">
    <property type="entry name" value="Nic_PRibTrfase"/>
</dbReference>
<dbReference type="InterPro" id="IPR007229">
    <property type="entry name" value="Nic_PRibTrfase-Fam"/>
</dbReference>
<dbReference type="InterPro" id="IPR036068">
    <property type="entry name" value="Nicotinate_pribotase-like_C"/>
</dbReference>
<dbReference type="NCBIfam" id="TIGR01514">
    <property type="entry name" value="NAPRTase"/>
    <property type="match status" value="1"/>
</dbReference>
<dbReference type="NCBIfam" id="NF003704">
    <property type="entry name" value="PRK05321.1"/>
    <property type="match status" value="1"/>
</dbReference>
<dbReference type="PANTHER" id="PTHR11098">
    <property type="entry name" value="NICOTINATE PHOSPHORIBOSYLTRANSFERASE"/>
    <property type="match status" value="1"/>
</dbReference>
<dbReference type="PANTHER" id="PTHR11098:SF1">
    <property type="entry name" value="NICOTINATE PHOSPHORIBOSYLTRANSFERASE"/>
    <property type="match status" value="1"/>
</dbReference>
<dbReference type="Pfam" id="PF04095">
    <property type="entry name" value="NAPRTase"/>
    <property type="match status" value="1"/>
</dbReference>
<dbReference type="Pfam" id="PF17767">
    <property type="entry name" value="NAPRTase_N"/>
    <property type="match status" value="1"/>
</dbReference>
<dbReference type="PIRSF" id="PIRSF000484">
    <property type="entry name" value="NAPRT"/>
    <property type="match status" value="1"/>
</dbReference>
<dbReference type="SUPFAM" id="SSF51690">
    <property type="entry name" value="Nicotinate/Quinolinate PRTase C-terminal domain-like"/>
    <property type="match status" value="1"/>
</dbReference>
<dbReference type="SUPFAM" id="SSF54675">
    <property type="entry name" value="Nicotinate/Quinolinate PRTase N-terminal domain-like"/>
    <property type="match status" value="1"/>
</dbReference>
<feature type="chain" id="PRO_0000205861" description="Probable nicotinate phosphoribosyltransferase">
    <location>
        <begin position="1"/>
        <end position="410"/>
    </location>
</feature>
<feature type="binding site" evidence="4">
    <location>
        <position position="15"/>
    </location>
    <ligand>
        <name>nicotinate</name>
        <dbReference type="ChEBI" id="CHEBI:32544"/>
    </ligand>
</feature>
<feature type="binding site" evidence="4">
    <location>
        <position position="170"/>
    </location>
    <ligand>
        <name>nicotinate</name>
        <dbReference type="ChEBI" id="CHEBI:32544"/>
    </ligand>
</feature>
<feature type="binding site" evidence="4">
    <location>
        <position position="220"/>
    </location>
    <ligand>
        <name>nicotinate</name>
        <dbReference type="ChEBI" id="CHEBI:32544"/>
    </ligand>
</feature>
<feature type="binding site" evidence="4">
    <location>
        <position position="348"/>
    </location>
    <ligand>
        <name>5-phospho-alpha-D-ribose 1-diphosphate</name>
        <dbReference type="ChEBI" id="CHEBI:58017"/>
    </ligand>
</feature>
<feature type="modified residue" description="Phosphohistidine" evidence="1">
    <location>
        <position position="223"/>
    </location>
</feature>
<evidence type="ECO:0000250" key="1">
    <source>
        <dbReference type="UniProtKB" id="P22253"/>
    </source>
</evidence>
<evidence type="ECO:0000250" key="2">
    <source>
        <dbReference type="UniProtKB" id="P39683"/>
    </source>
</evidence>
<evidence type="ECO:0000250" key="3">
    <source>
        <dbReference type="UniProtKB" id="Q6XQN6"/>
    </source>
</evidence>
<evidence type="ECO:0000250" key="4">
    <source>
        <dbReference type="UniProtKB" id="Q9HJ28"/>
    </source>
</evidence>
<evidence type="ECO:0000305" key="5"/>
<protein>
    <recommendedName>
        <fullName>Probable nicotinate phosphoribosyltransferase</fullName>
        <shortName>NAPRTase</shortName>
        <ecNumber evidence="2">6.3.4.21</ecNumber>
    </recommendedName>
</protein>
<comment type="function">
    <text evidence="3">Catalyzes the first step in the biosynthesis of NAD from nicotinic acid, the ATP-dependent synthesis of beta-nicotinate D-ribonucleotide from nicotinate and 5-phospho-D-ribose 1-phosphate. Helps prevent cellular oxidative stress via its role in NAD biosynthesis.</text>
</comment>
<comment type="catalytic activity">
    <reaction evidence="2">
        <text>nicotinate + 5-phospho-alpha-D-ribose 1-diphosphate + ATP + H2O = nicotinate beta-D-ribonucleotide + ADP + phosphate + diphosphate</text>
        <dbReference type="Rhea" id="RHEA:36163"/>
        <dbReference type="ChEBI" id="CHEBI:15377"/>
        <dbReference type="ChEBI" id="CHEBI:30616"/>
        <dbReference type="ChEBI" id="CHEBI:32544"/>
        <dbReference type="ChEBI" id="CHEBI:33019"/>
        <dbReference type="ChEBI" id="CHEBI:43474"/>
        <dbReference type="ChEBI" id="CHEBI:57502"/>
        <dbReference type="ChEBI" id="CHEBI:58017"/>
        <dbReference type="ChEBI" id="CHEBI:456216"/>
        <dbReference type="EC" id="6.3.4.21"/>
    </reaction>
</comment>
<comment type="cofactor">
    <cofactor evidence="3">
        <name>Mg(2+)</name>
        <dbReference type="ChEBI" id="CHEBI:18420"/>
    </cofactor>
    <cofactor evidence="3">
        <name>Mn(2+)</name>
        <dbReference type="ChEBI" id="CHEBI:29035"/>
    </cofactor>
    <text evidence="3">Activity is highest with Mn(2+).</text>
</comment>
<comment type="pathway">
    <text evidence="3">Cofactor biosynthesis; NAD(+) biosynthesis; nicotinate D-ribonucleotide from nicotinate: step 1/1.</text>
</comment>
<comment type="PTM">
    <text evidence="1">Transiently phosphorylated on a His residue during the reaction cycle. Phosphorylation strongly increases the affinity for substrates and increases the rate of nicotinate D-ribonucleotide production. Dephosphorylation regenerates the low-affinity form of the enzyme, leading to product release.</text>
</comment>
<comment type="similarity">
    <text evidence="5">Belongs to the NAPRTase family.</text>
</comment>
<organism>
    <name type="scientific">Schizosaccharomyces pombe (strain 972 / ATCC 24843)</name>
    <name type="common">Fission yeast</name>
    <dbReference type="NCBI Taxonomy" id="284812"/>
    <lineage>
        <taxon>Eukaryota</taxon>
        <taxon>Fungi</taxon>
        <taxon>Dikarya</taxon>
        <taxon>Ascomycota</taxon>
        <taxon>Taphrinomycotina</taxon>
        <taxon>Schizosaccharomycetes</taxon>
        <taxon>Schizosaccharomycetales</taxon>
        <taxon>Schizosaccharomycetaceae</taxon>
        <taxon>Schizosaccharomyces</taxon>
    </lineage>
</organism>
<proteinExistence type="inferred from homology"/>
<sequence length="410" mass="46694">MSEPAVVSILDTDLYKLTMLQAVLEHYPDAQVSYKYTNRSPKMALNQEAYNWLREQIRGLRNLHLLPEEEQWLRKNCPYLKESFYEFMHEFEFDPENSISLNYDSETKDLSIFIHGLWKNTIFYEIPLLALVSESYFKFVDKDWSPEGQFEKAYEKGKRLIRAGCAFTDFGTRRRRDPHTQEIVLQGLMKAQEDFKGPGSFLGTSNVYFAAKYNLNVSGTVAHEWYMGIAAITQNYKQANRIASLKWVQTFGTSLLIALTDTFSTDVFLKSFTANSADDLANVFHGVRQDSGCAEEYIEKVVKHYKSIGVDPSTKVIVHSDALNVDRCIELYKYCEKCGIKSAFGIGTNLTSDFQKVSNPSEVSKPMNIVIKLFSAEGTKAVKISDDIMKNTGDRDAVIQAKHQLCLPIA</sequence>
<gene>
    <name type="ORF">SPAC1486.06</name>
</gene>
<name>NPT1_SCHPO</name>
<keyword id="KW-0436">Ligase</keyword>
<keyword id="KW-0460">Magnesium</keyword>
<keyword id="KW-0464">Manganese</keyword>
<keyword id="KW-0479">Metal-binding</keyword>
<keyword id="KW-0597">Phosphoprotein</keyword>
<keyword id="KW-0662">Pyridine nucleotide biosynthesis</keyword>
<keyword id="KW-1185">Reference proteome</keyword>
<keyword id="KW-0808">Transferase</keyword>